<dbReference type="EC" id="6.3.4.2" evidence="1"/>
<dbReference type="EMBL" id="AE000520">
    <property type="protein sequence ID" value="AAC65292.1"/>
    <property type="molecule type" value="Genomic_DNA"/>
</dbReference>
<dbReference type="PIR" id="C71342">
    <property type="entry name" value="C71342"/>
</dbReference>
<dbReference type="RefSeq" id="WP_010881754.1">
    <property type="nucleotide sequence ID" value="NC_021490.2"/>
</dbReference>
<dbReference type="SMR" id="O83327"/>
<dbReference type="IntAct" id="O83327">
    <property type="interactions" value="4"/>
</dbReference>
<dbReference type="STRING" id="243276.TP_0305"/>
<dbReference type="EnsemblBacteria" id="AAC65292">
    <property type="protein sequence ID" value="AAC65292"/>
    <property type="gene ID" value="TP_0305"/>
</dbReference>
<dbReference type="KEGG" id="tpa:TP_0305"/>
<dbReference type="KEGG" id="tpw:TPANIC_0305"/>
<dbReference type="eggNOG" id="COG0504">
    <property type="taxonomic scope" value="Bacteria"/>
</dbReference>
<dbReference type="HOGENOM" id="CLU_011675_5_0_12"/>
<dbReference type="OrthoDB" id="9801107at2"/>
<dbReference type="UniPathway" id="UPA00159">
    <property type="reaction ID" value="UER00277"/>
</dbReference>
<dbReference type="Proteomes" id="UP000000811">
    <property type="component" value="Chromosome"/>
</dbReference>
<dbReference type="GO" id="GO:0005829">
    <property type="term" value="C:cytosol"/>
    <property type="evidence" value="ECO:0007669"/>
    <property type="project" value="TreeGrafter"/>
</dbReference>
<dbReference type="GO" id="GO:0005524">
    <property type="term" value="F:ATP binding"/>
    <property type="evidence" value="ECO:0007669"/>
    <property type="project" value="UniProtKB-KW"/>
</dbReference>
<dbReference type="GO" id="GO:0003883">
    <property type="term" value="F:CTP synthase activity"/>
    <property type="evidence" value="ECO:0007669"/>
    <property type="project" value="UniProtKB-UniRule"/>
</dbReference>
<dbReference type="GO" id="GO:0004359">
    <property type="term" value="F:glutaminase activity"/>
    <property type="evidence" value="ECO:0007669"/>
    <property type="project" value="RHEA"/>
</dbReference>
<dbReference type="GO" id="GO:0042802">
    <property type="term" value="F:identical protein binding"/>
    <property type="evidence" value="ECO:0007669"/>
    <property type="project" value="TreeGrafter"/>
</dbReference>
<dbReference type="GO" id="GO:0046872">
    <property type="term" value="F:metal ion binding"/>
    <property type="evidence" value="ECO:0007669"/>
    <property type="project" value="UniProtKB-KW"/>
</dbReference>
<dbReference type="GO" id="GO:0044210">
    <property type="term" value="P:'de novo' CTP biosynthetic process"/>
    <property type="evidence" value="ECO:0007669"/>
    <property type="project" value="UniProtKB-UniRule"/>
</dbReference>
<dbReference type="GO" id="GO:0019856">
    <property type="term" value="P:pyrimidine nucleobase biosynthetic process"/>
    <property type="evidence" value="ECO:0007669"/>
    <property type="project" value="TreeGrafter"/>
</dbReference>
<dbReference type="CDD" id="cd03113">
    <property type="entry name" value="CTPS_N"/>
    <property type="match status" value="1"/>
</dbReference>
<dbReference type="CDD" id="cd01746">
    <property type="entry name" value="GATase1_CTP_Synthase"/>
    <property type="match status" value="1"/>
</dbReference>
<dbReference type="FunFam" id="3.40.50.300:FF:000009">
    <property type="entry name" value="CTP synthase"/>
    <property type="match status" value="1"/>
</dbReference>
<dbReference type="FunFam" id="3.40.50.880:FF:000002">
    <property type="entry name" value="CTP synthase"/>
    <property type="match status" value="1"/>
</dbReference>
<dbReference type="Gene3D" id="3.40.50.880">
    <property type="match status" value="1"/>
</dbReference>
<dbReference type="Gene3D" id="3.40.50.300">
    <property type="entry name" value="P-loop containing nucleotide triphosphate hydrolases"/>
    <property type="match status" value="1"/>
</dbReference>
<dbReference type="HAMAP" id="MF_01227">
    <property type="entry name" value="PyrG"/>
    <property type="match status" value="1"/>
</dbReference>
<dbReference type="InterPro" id="IPR029062">
    <property type="entry name" value="Class_I_gatase-like"/>
</dbReference>
<dbReference type="InterPro" id="IPR004468">
    <property type="entry name" value="CTP_synthase"/>
</dbReference>
<dbReference type="InterPro" id="IPR017456">
    <property type="entry name" value="CTP_synthase_N"/>
</dbReference>
<dbReference type="InterPro" id="IPR017926">
    <property type="entry name" value="GATASE"/>
</dbReference>
<dbReference type="InterPro" id="IPR033828">
    <property type="entry name" value="GATase1_CTP_Synthase"/>
</dbReference>
<dbReference type="InterPro" id="IPR027417">
    <property type="entry name" value="P-loop_NTPase"/>
</dbReference>
<dbReference type="NCBIfam" id="NF003792">
    <property type="entry name" value="PRK05380.1"/>
    <property type="match status" value="1"/>
</dbReference>
<dbReference type="NCBIfam" id="TIGR00337">
    <property type="entry name" value="PyrG"/>
    <property type="match status" value="1"/>
</dbReference>
<dbReference type="PANTHER" id="PTHR11550">
    <property type="entry name" value="CTP SYNTHASE"/>
    <property type="match status" value="1"/>
</dbReference>
<dbReference type="PANTHER" id="PTHR11550:SF0">
    <property type="entry name" value="CTP SYNTHASE-RELATED"/>
    <property type="match status" value="1"/>
</dbReference>
<dbReference type="Pfam" id="PF06418">
    <property type="entry name" value="CTP_synth_N"/>
    <property type="match status" value="1"/>
</dbReference>
<dbReference type="Pfam" id="PF00117">
    <property type="entry name" value="GATase"/>
    <property type="match status" value="1"/>
</dbReference>
<dbReference type="SUPFAM" id="SSF52317">
    <property type="entry name" value="Class I glutamine amidotransferase-like"/>
    <property type="match status" value="1"/>
</dbReference>
<dbReference type="SUPFAM" id="SSF52540">
    <property type="entry name" value="P-loop containing nucleoside triphosphate hydrolases"/>
    <property type="match status" value="1"/>
</dbReference>
<dbReference type="PROSITE" id="PS51273">
    <property type="entry name" value="GATASE_TYPE_1"/>
    <property type="match status" value="1"/>
</dbReference>
<evidence type="ECO:0000255" key="1">
    <source>
        <dbReference type="HAMAP-Rule" id="MF_01227"/>
    </source>
</evidence>
<feature type="chain" id="PRO_0000138244" description="CTP synthase">
    <location>
        <begin position="1"/>
        <end position="577"/>
    </location>
</feature>
<feature type="domain" description="Glutamine amidotransferase type-1" evidence="1">
    <location>
        <begin position="333"/>
        <end position="575"/>
    </location>
</feature>
<feature type="region of interest" description="Amidoligase domain" evidence="1">
    <location>
        <begin position="1"/>
        <end position="268"/>
    </location>
</feature>
<feature type="active site" description="Nucleophile; for glutamine hydrolysis" evidence="1">
    <location>
        <position position="423"/>
    </location>
</feature>
<feature type="active site" evidence="1">
    <location>
        <position position="548"/>
    </location>
</feature>
<feature type="active site" evidence="1">
    <location>
        <position position="550"/>
    </location>
</feature>
<feature type="binding site" evidence="1">
    <location>
        <position position="14"/>
    </location>
    <ligand>
        <name>CTP</name>
        <dbReference type="ChEBI" id="CHEBI:37563"/>
        <note>allosteric inhibitor</note>
    </ligand>
</feature>
<feature type="binding site" evidence="1">
    <location>
        <position position="14"/>
    </location>
    <ligand>
        <name>UTP</name>
        <dbReference type="ChEBI" id="CHEBI:46398"/>
    </ligand>
</feature>
<feature type="binding site" evidence="1">
    <location>
        <begin position="15"/>
        <end position="20"/>
    </location>
    <ligand>
        <name>ATP</name>
        <dbReference type="ChEBI" id="CHEBI:30616"/>
    </ligand>
</feature>
<feature type="binding site" evidence="1">
    <location>
        <position position="55"/>
    </location>
    <ligand>
        <name>L-glutamine</name>
        <dbReference type="ChEBI" id="CHEBI:58359"/>
    </ligand>
</feature>
<feature type="binding site" evidence="1">
    <location>
        <position position="72"/>
    </location>
    <ligand>
        <name>ATP</name>
        <dbReference type="ChEBI" id="CHEBI:30616"/>
    </ligand>
</feature>
<feature type="binding site" evidence="1">
    <location>
        <position position="72"/>
    </location>
    <ligand>
        <name>Mg(2+)</name>
        <dbReference type="ChEBI" id="CHEBI:18420"/>
    </ligand>
</feature>
<feature type="binding site" evidence="1">
    <location>
        <position position="142"/>
    </location>
    <ligand>
        <name>Mg(2+)</name>
        <dbReference type="ChEBI" id="CHEBI:18420"/>
    </ligand>
</feature>
<feature type="binding site" evidence="1">
    <location>
        <begin position="149"/>
        <end position="151"/>
    </location>
    <ligand>
        <name>CTP</name>
        <dbReference type="ChEBI" id="CHEBI:37563"/>
        <note>allosteric inhibitor</note>
    </ligand>
</feature>
<feature type="binding site" evidence="1">
    <location>
        <begin position="189"/>
        <end position="194"/>
    </location>
    <ligand>
        <name>CTP</name>
        <dbReference type="ChEBI" id="CHEBI:37563"/>
        <note>allosteric inhibitor</note>
    </ligand>
</feature>
<feature type="binding site" evidence="1">
    <location>
        <begin position="189"/>
        <end position="194"/>
    </location>
    <ligand>
        <name>UTP</name>
        <dbReference type="ChEBI" id="CHEBI:46398"/>
    </ligand>
</feature>
<feature type="binding site" evidence="1">
    <location>
        <position position="225"/>
    </location>
    <ligand>
        <name>CTP</name>
        <dbReference type="ChEBI" id="CHEBI:37563"/>
        <note>allosteric inhibitor</note>
    </ligand>
</feature>
<feature type="binding site" evidence="1">
    <location>
        <position position="225"/>
    </location>
    <ligand>
        <name>UTP</name>
        <dbReference type="ChEBI" id="CHEBI:46398"/>
    </ligand>
</feature>
<feature type="binding site" evidence="1">
    <location>
        <position position="396"/>
    </location>
    <ligand>
        <name>L-glutamine</name>
        <dbReference type="ChEBI" id="CHEBI:58359"/>
    </ligand>
</feature>
<feature type="binding site" evidence="1">
    <location>
        <begin position="424"/>
        <end position="427"/>
    </location>
    <ligand>
        <name>L-glutamine</name>
        <dbReference type="ChEBI" id="CHEBI:58359"/>
    </ligand>
</feature>
<feature type="binding site" evidence="1">
    <location>
        <position position="447"/>
    </location>
    <ligand>
        <name>L-glutamine</name>
        <dbReference type="ChEBI" id="CHEBI:58359"/>
    </ligand>
</feature>
<feature type="binding site" evidence="1">
    <location>
        <position position="503"/>
    </location>
    <ligand>
        <name>L-glutamine</name>
        <dbReference type="ChEBI" id="CHEBI:58359"/>
    </ligand>
</feature>
<gene>
    <name evidence="1" type="primary">pyrG</name>
    <name type="ordered locus">TP_0305</name>
</gene>
<accession>O83327</accession>
<name>PYRG_TREPA</name>
<reference key="1">
    <citation type="journal article" date="1998" name="Science">
        <title>Complete genome sequence of Treponema pallidum, the syphilis spirochete.</title>
        <authorList>
            <person name="Fraser C.M."/>
            <person name="Norris S.J."/>
            <person name="Weinstock G.M."/>
            <person name="White O."/>
            <person name="Sutton G.G."/>
            <person name="Dodson R.J."/>
            <person name="Gwinn M.L."/>
            <person name="Hickey E.K."/>
            <person name="Clayton R.A."/>
            <person name="Ketchum K.A."/>
            <person name="Sodergren E."/>
            <person name="Hardham J.M."/>
            <person name="McLeod M.P."/>
            <person name="Salzberg S.L."/>
            <person name="Peterson J.D."/>
            <person name="Khalak H.G."/>
            <person name="Richardson D.L."/>
            <person name="Howell J.K."/>
            <person name="Chidambaram M."/>
            <person name="Utterback T.R."/>
            <person name="McDonald L.A."/>
            <person name="Artiach P."/>
            <person name="Bowman C."/>
            <person name="Cotton M.D."/>
            <person name="Fujii C."/>
            <person name="Garland S.A."/>
            <person name="Hatch B."/>
            <person name="Horst K."/>
            <person name="Roberts K.M."/>
            <person name="Sandusky M."/>
            <person name="Weidman J.F."/>
            <person name="Smith H.O."/>
            <person name="Venter J.C."/>
        </authorList>
    </citation>
    <scope>NUCLEOTIDE SEQUENCE [LARGE SCALE GENOMIC DNA]</scope>
    <source>
        <strain>Nichols</strain>
    </source>
</reference>
<keyword id="KW-0067">ATP-binding</keyword>
<keyword id="KW-0315">Glutamine amidotransferase</keyword>
<keyword id="KW-0436">Ligase</keyword>
<keyword id="KW-0460">Magnesium</keyword>
<keyword id="KW-0479">Metal-binding</keyword>
<keyword id="KW-0547">Nucleotide-binding</keyword>
<keyword id="KW-0665">Pyrimidine biosynthesis</keyword>
<keyword id="KW-1185">Reference proteome</keyword>
<organism>
    <name type="scientific">Treponema pallidum (strain Nichols)</name>
    <dbReference type="NCBI Taxonomy" id="243276"/>
    <lineage>
        <taxon>Bacteria</taxon>
        <taxon>Pseudomonadati</taxon>
        <taxon>Spirochaetota</taxon>
        <taxon>Spirochaetia</taxon>
        <taxon>Spirochaetales</taxon>
        <taxon>Treponemataceae</taxon>
        <taxon>Treponema</taxon>
    </lineage>
</organism>
<sequence>MDPAFIFITGGVVSSLGKGIAAGAIGLLLKSRGISVVNQKFDPYLNGDPGTMNPYQHGEVFVTQDGGETDLDLGHYERFTDVPSSRFNSTTAGSVYRAILDRERAGGYGGATVQVIPHVTDEIQARIRAAAATTGARVVITEIGGTVGDIESLPFIEAIRQIRRVLGKERCLFIHLGLVPYLPSCGEMKTKPLQHSVKELLGLGVQPDVILCRSERHITDAVREKLSLFCNVERRAIVENVTARSIYEVPLLLEAEGLGALLCERLRLFDTCCGGQVARNLGAGGAQSAVLGAGGTVRTDGGLHPAAGQGAEPDLTAWRAMVRALYYPRRELTVALVGKYVSLADAYLSVSEALTAAGICHRARVDMRWIDAEEICSVQDAGHALADADALVIPGGFGVRGIEGMICAVSHARVQNLPYLGICLGMQIAVIEFARNVLLLASAHSREFAVDTPHPVVDLLPGCVDTPTGGSLRLGQYRCLLAEGSRARALYGRGEVWERHRHRYGLNAAYRARFEASALRPVGVDSDCGAVEVVEHGEHPWFFGVQFHPEFCSRPNRAHPLFRALVAAGLERKDSRS</sequence>
<protein>
    <recommendedName>
        <fullName evidence="1">CTP synthase</fullName>
        <ecNumber evidence="1">6.3.4.2</ecNumber>
    </recommendedName>
    <alternativeName>
        <fullName evidence="1">Cytidine 5'-triphosphate synthase</fullName>
    </alternativeName>
    <alternativeName>
        <fullName evidence="1">Cytidine triphosphate synthetase</fullName>
        <shortName evidence="1">CTP synthetase</shortName>
        <shortName evidence="1">CTPS</shortName>
    </alternativeName>
    <alternativeName>
        <fullName evidence="1">UTP--ammonia ligase</fullName>
    </alternativeName>
</protein>
<proteinExistence type="inferred from homology"/>
<comment type="function">
    <text evidence="1">Catalyzes the ATP-dependent amination of UTP to CTP with either L-glutamine or ammonia as the source of nitrogen. Regulates intracellular CTP levels through interactions with the four ribonucleotide triphosphates.</text>
</comment>
<comment type="catalytic activity">
    <reaction evidence="1">
        <text>UTP + L-glutamine + ATP + H2O = CTP + L-glutamate + ADP + phosphate + 2 H(+)</text>
        <dbReference type="Rhea" id="RHEA:26426"/>
        <dbReference type="ChEBI" id="CHEBI:15377"/>
        <dbReference type="ChEBI" id="CHEBI:15378"/>
        <dbReference type="ChEBI" id="CHEBI:29985"/>
        <dbReference type="ChEBI" id="CHEBI:30616"/>
        <dbReference type="ChEBI" id="CHEBI:37563"/>
        <dbReference type="ChEBI" id="CHEBI:43474"/>
        <dbReference type="ChEBI" id="CHEBI:46398"/>
        <dbReference type="ChEBI" id="CHEBI:58359"/>
        <dbReference type="ChEBI" id="CHEBI:456216"/>
        <dbReference type="EC" id="6.3.4.2"/>
    </reaction>
</comment>
<comment type="catalytic activity">
    <reaction evidence="1">
        <text>L-glutamine + H2O = L-glutamate + NH4(+)</text>
        <dbReference type="Rhea" id="RHEA:15889"/>
        <dbReference type="ChEBI" id="CHEBI:15377"/>
        <dbReference type="ChEBI" id="CHEBI:28938"/>
        <dbReference type="ChEBI" id="CHEBI:29985"/>
        <dbReference type="ChEBI" id="CHEBI:58359"/>
    </reaction>
</comment>
<comment type="catalytic activity">
    <reaction evidence="1">
        <text>UTP + NH4(+) + ATP = CTP + ADP + phosphate + 2 H(+)</text>
        <dbReference type="Rhea" id="RHEA:16597"/>
        <dbReference type="ChEBI" id="CHEBI:15378"/>
        <dbReference type="ChEBI" id="CHEBI:28938"/>
        <dbReference type="ChEBI" id="CHEBI:30616"/>
        <dbReference type="ChEBI" id="CHEBI:37563"/>
        <dbReference type="ChEBI" id="CHEBI:43474"/>
        <dbReference type="ChEBI" id="CHEBI:46398"/>
        <dbReference type="ChEBI" id="CHEBI:456216"/>
    </reaction>
</comment>
<comment type="activity regulation">
    <text evidence="1">Allosterically activated by GTP, when glutamine is the substrate; GTP has no effect on the reaction when ammonia is the substrate. The allosteric effector GTP functions by stabilizing the protein conformation that binds the tetrahedral intermediate(s) formed during glutamine hydrolysis. Inhibited by the product CTP, via allosteric rather than competitive inhibition.</text>
</comment>
<comment type="pathway">
    <text evidence="1">Pyrimidine metabolism; CTP biosynthesis via de novo pathway; CTP from UDP: step 2/2.</text>
</comment>
<comment type="subunit">
    <text evidence="1">Homotetramer.</text>
</comment>
<comment type="miscellaneous">
    <text evidence="1">CTPSs have evolved a hybrid strategy for distinguishing between UTP and CTP. The overlapping regions of the product feedback inhibitory and substrate sites recognize a common feature in both compounds, the triphosphate moiety. To differentiate isosteric substrate and product pyrimidine rings, an additional pocket far from the expected kinase/ligase catalytic site, specifically recognizes the cytosine and ribose portions of the product inhibitor.</text>
</comment>
<comment type="similarity">
    <text evidence="1">Belongs to the CTP synthase family.</text>
</comment>